<keyword id="KW-0963">Cytoplasm</keyword>
<keyword id="KW-0489">Methyltransferase</keyword>
<keyword id="KW-0545">Nucleotide biosynthesis</keyword>
<keyword id="KW-0808">Transferase</keyword>
<sequence length="279" mass="32554">MTKADTIFKENIERILKEGVFSEQARPKYKDGTVANSKYVTGAFSEYDLSKGEFPITTLRPIAIKSAIKEVLWIYQDQSNSLEVLNDKYNVHYWNDWEVGDTGTIGERYGAVVKKHDIINKLLKQLETNPWNRRNIISLWDYQAFEETDGLLPCAFQTMFDVRRVDGEIYLDATLTQRSNDMLVAHHINAMQYVALQMMIAKHFGWKVGKFFYFINNLHIYDNQFEQAQELLRREPSNCQPRLVLNVPDGTNFFDIKAEDFELVDYDPVKPQLKFDLAI</sequence>
<protein>
    <recommendedName>
        <fullName evidence="1">Thymidylate synthase</fullName>
        <shortName evidence="1">TS</shortName>
        <shortName evidence="1">TSase</shortName>
        <ecNumber evidence="1">2.1.1.45</ecNumber>
    </recommendedName>
</protein>
<gene>
    <name evidence="1" type="primary">thyA</name>
    <name type="ordered locus">SPP_0690</name>
</gene>
<proteinExistence type="inferred from homology"/>
<comment type="function">
    <text evidence="1">Catalyzes the reductive methylation of 2'-deoxyuridine-5'-monophosphate (dUMP) to 2'-deoxythymidine-5'-monophosphate (dTMP) while utilizing 5,10-methylenetetrahydrofolate (mTHF) as the methyl donor and reductant in the reaction, yielding dihydrofolate (DHF) as a by-product. This enzymatic reaction provides an intracellular de novo source of dTMP, an essential precursor for DNA biosynthesis.</text>
</comment>
<comment type="catalytic activity">
    <reaction evidence="1">
        <text>dUMP + (6R)-5,10-methylene-5,6,7,8-tetrahydrofolate = 7,8-dihydrofolate + dTMP</text>
        <dbReference type="Rhea" id="RHEA:12104"/>
        <dbReference type="ChEBI" id="CHEBI:15636"/>
        <dbReference type="ChEBI" id="CHEBI:57451"/>
        <dbReference type="ChEBI" id="CHEBI:63528"/>
        <dbReference type="ChEBI" id="CHEBI:246422"/>
        <dbReference type="EC" id="2.1.1.45"/>
    </reaction>
</comment>
<comment type="pathway">
    <text evidence="1">Pyrimidine metabolism; dTTP biosynthesis.</text>
</comment>
<comment type="subunit">
    <text evidence="1">Homodimer.</text>
</comment>
<comment type="subcellular location">
    <subcellularLocation>
        <location evidence="1">Cytoplasm</location>
    </subcellularLocation>
</comment>
<comment type="similarity">
    <text evidence="1">Belongs to the thymidylate synthase family. Bacterial-type ThyA subfamily.</text>
</comment>
<name>TYSY_STRZP</name>
<accession>C1CJD5</accession>
<dbReference type="EC" id="2.1.1.45" evidence="1"/>
<dbReference type="EMBL" id="CP000920">
    <property type="protein sequence ID" value="ACO22050.1"/>
    <property type="molecule type" value="Genomic_DNA"/>
</dbReference>
<dbReference type="RefSeq" id="WP_000158639.1">
    <property type="nucleotide sequence ID" value="NC_012467.1"/>
</dbReference>
<dbReference type="SMR" id="C1CJD5"/>
<dbReference type="KEGG" id="spp:SPP_0690"/>
<dbReference type="HOGENOM" id="CLU_021669_0_0_9"/>
<dbReference type="UniPathway" id="UPA00575"/>
<dbReference type="GO" id="GO:0005829">
    <property type="term" value="C:cytosol"/>
    <property type="evidence" value="ECO:0007669"/>
    <property type="project" value="TreeGrafter"/>
</dbReference>
<dbReference type="GO" id="GO:0004799">
    <property type="term" value="F:thymidylate synthase activity"/>
    <property type="evidence" value="ECO:0007669"/>
    <property type="project" value="UniProtKB-UniRule"/>
</dbReference>
<dbReference type="GO" id="GO:0006231">
    <property type="term" value="P:dTMP biosynthetic process"/>
    <property type="evidence" value="ECO:0007669"/>
    <property type="project" value="UniProtKB-UniRule"/>
</dbReference>
<dbReference type="GO" id="GO:0006235">
    <property type="term" value="P:dTTP biosynthetic process"/>
    <property type="evidence" value="ECO:0007669"/>
    <property type="project" value="UniProtKB-UniRule"/>
</dbReference>
<dbReference type="GO" id="GO:0032259">
    <property type="term" value="P:methylation"/>
    <property type="evidence" value="ECO:0007669"/>
    <property type="project" value="UniProtKB-KW"/>
</dbReference>
<dbReference type="CDD" id="cd00351">
    <property type="entry name" value="TS_Pyrimidine_HMase"/>
    <property type="match status" value="1"/>
</dbReference>
<dbReference type="FunFam" id="3.30.572.10:FF:000006">
    <property type="entry name" value="Thymidylate synthase"/>
    <property type="match status" value="1"/>
</dbReference>
<dbReference type="Gene3D" id="3.30.572.10">
    <property type="entry name" value="Thymidylate synthase/dCMP hydroxymethylase domain"/>
    <property type="match status" value="1"/>
</dbReference>
<dbReference type="HAMAP" id="MF_00008">
    <property type="entry name" value="Thymidy_synth_bact"/>
    <property type="match status" value="1"/>
</dbReference>
<dbReference type="InterPro" id="IPR045097">
    <property type="entry name" value="Thymidate_synth/dCMP_Mease"/>
</dbReference>
<dbReference type="InterPro" id="IPR023451">
    <property type="entry name" value="Thymidate_synth/dCMP_Mease_dom"/>
</dbReference>
<dbReference type="InterPro" id="IPR036926">
    <property type="entry name" value="Thymidate_synth/dCMP_Mease_sf"/>
</dbReference>
<dbReference type="InterPro" id="IPR000398">
    <property type="entry name" value="Thymidylate_synthase"/>
</dbReference>
<dbReference type="InterPro" id="IPR020940">
    <property type="entry name" value="Thymidylate_synthase_AS"/>
</dbReference>
<dbReference type="NCBIfam" id="NF002495">
    <property type="entry name" value="PRK01827.1-1"/>
    <property type="match status" value="1"/>
</dbReference>
<dbReference type="PANTHER" id="PTHR11548">
    <property type="entry name" value="THYMIDYLATE SYNTHASE 1"/>
    <property type="match status" value="1"/>
</dbReference>
<dbReference type="PANTHER" id="PTHR11548:SF1">
    <property type="entry name" value="THYMIDYLATE SYNTHASE 1"/>
    <property type="match status" value="1"/>
</dbReference>
<dbReference type="Pfam" id="PF00303">
    <property type="entry name" value="Thymidylat_synt"/>
    <property type="match status" value="1"/>
</dbReference>
<dbReference type="PRINTS" id="PR00108">
    <property type="entry name" value="THYMDSNTHASE"/>
</dbReference>
<dbReference type="SUPFAM" id="SSF55831">
    <property type="entry name" value="Thymidylate synthase/dCMP hydroxymethylase"/>
    <property type="match status" value="1"/>
</dbReference>
<dbReference type="PROSITE" id="PS00091">
    <property type="entry name" value="THYMIDYLATE_SYNTHASE"/>
    <property type="match status" value="1"/>
</dbReference>
<reference key="1">
    <citation type="journal article" date="2010" name="Genome Biol.">
        <title>Structure and dynamics of the pan-genome of Streptococcus pneumoniae and closely related species.</title>
        <authorList>
            <person name="Donati C."/>
            <person name="Hiller N.L."/>
            <person name="Tettelin H."/>
            <person name="Muzzi A."/>
            <person name="Croucher N.J."/>
            <person name="Angiuoli S.V."/>
            <person name="Oggioni M."/>
            <person name="Dunning Hotopp J.C."/>
            <person name="Hu F.Z."/>
            <person name="Riley D.R."/>
            <person name="Covacci A."/>
            <person name="Mitchell T.J."/>
            <person name="Bentley S.D."/>
            <person name="Kilian M."/>
            <person name="Ehrlich G.D."/>
            <person name="Rappuoli R."/>
            <person name="Moxon E.R."/>
            <person name="Masignani V."/>
        </authorList>
    </citation>
    <scope>NUCLEOTIDE SEQUENCE [LARGE SCALE GENOMIC DNA]</scope>
    <source>
        <strain>P1031</strain>
    </source>
</reference>
<evidence type="ECO:0000255" key="1">
    <source>
        <dbReference type="HAMAP-Rule" id="MF_00008"/>
    </source>
</evidence>
<organism>
    <name type="scientific">Streptococcus pneumoniae (strain P1031)</name>
    <dbReference type="NCBI Taxonomy" id="488223"/>
    <lineage>
        <taxon>Bacteria</taxon>
        <taxon>Bacillati</taxon>
        <taxon>Bacillota</taxon>
        <taxon>Bacilli</taxon>
        <taxon>Lactobacillales</taxon>
        <taxon>Streptococcaceae</taxon>
        <taxon>Streptococcus</taxon>
    </lineage>
</organism>
<feature type="chain" id="PRO_1000197264" description="Thymidylate synthase">
    <location>
        <begin position="1"/>
        <end position="279"/>
    </location>
</feature>
<feature type="active site" description="Nucleophile" evidence="1">
    <location>
        <position position="154"/>
    </location>
</feature>
<feature type="binding site" evidence="1">
    <location>
        <begin position="133"/>
        <end position="134"/>
    </location>
    <ligand>
        <name>dUMP</name>
        <dbReference type="ChEBI" id="CHEBI:246422"/>
        <note>ligand shared between dimeric partners</note>
    </ligand>
</feature>
<feature type="binding site" description="in other chain" evidence="1">
    <location>
        <begin position="178"/>
        <end position="181"/>
    </location>
    <ligand>
        <name>dUMP</name>
        <dbReference type="ChEBI" id="CHEBI:246422"/>
        <note>ligand shared between dimeric partners</note>
    </ligand>
</feature>
<feature type="binding site" evidence="1">
    <location>
        <position position="181"/>
    </location>
    <ligand>
        <name>(6R)-5,10-methylene-5,6,7,8-tetrahydrofolate</name>
        <dbReference type="ChEBI" id="CHEBI:15636"/>
    </ligand>
</feature>
<feature type="binding site" description="in other chain" evidence="1">
    <location>
        <position position="189"/>
    </location>
    <ligand>
        <name>dUMP</name>
        <dbReference type="ChEBI" id="CHEBI:246422"/>
        <note>ligand shared between dimeric partners</note>
    </ligand>
</feature>
<feature type="binding site" description="in other chain" evidence="1">
    <location>
        <begin position="219"/>
        <end position="221"/>
    </location>
    <ligand>
        <name>dUMP</name>
        <dbReference type="ChEBI" id="CHEBI:246422"/>
        <note>ligand shared between dimeric partners</note>
    </ligand>
</feature>
<feature type="binding site" evidence="1">
    <location>
        <position position="278"/>
    </location>
    <ligand>
        <name>(6R)-5,10-methylene-5,6,7,8-tetrahydrofolate</name>
        <dbReference type="ChEBI" id="CHEBI:15636"/>
    </ligand>
</feature>